<name>PTTH_CAMFO</name>
<reference key="1">
    <citation type="journal article" date="2010" name="Science">
        <title>Genomic comparison of the ants Camponotus floridanus and Harpegnathos saltator.</title>
        <authorList>
            <person name="Bonasio R."/>
            <person name="Zhang G."/>
            <person name="Ye C."/>
            <person name="Mutti N.S."/>
            <person name="Fang X."/>
            <person name="Qin N."/>
            <person name="Donahue G."/>
            <person name="Yang P."/>
            <person name="Li Q."/>
            <person name="Li C."/>
            <person name="Zhang P."/>
            <person name="Huang Z."/>
            <person name="Berger S.L."/>
            <person name="Reinberg D."/>
            <person name="Wang J."/>
            <person name="Liebig J."/>
        </authorList>
    </citation>
    <scope>NUCLEOTIDE SEQUENCE [LARGE SCALE GENOMIC DNA]</scope>
</reference>
<reference evidence="4" key="2">
    <citation type="journal article" date="2015" name="J. Proteome Res.">
        <title>Neuropeptidomics of the carpenter ant Camponotus floridanus.</title>
        <authorList>
            <person name="Schmitt F."/>
            <person name="Vanselow J.T."/>
            <person name="Schlosser A."/>
            <person name="Kahnt J."/>
            <person name="Roessler W."/>
            <person name="Wegener C."/>
        </authorList>
    </citation>
    <scope>PROTEIN SEQUENCE OF 67-81</scope>
    <scope>IDENTIFICATION BY MASS SPECTROMETRY</scope>
</reference>
<dbReference type="EMBL" id="GL434548">
    <property type="protein sequence ID" value="EFN74770.1"/>
    <property type="molecule type" value="Genomic_DNA"/>
</dbReference>
<dbReference type="RefSeq" id="XP_011250847.2">
    <property type="nucleotide sequence ID" value="XM_011252545.2"/>
</dbReference>
<dbReference type="EnsemblMetazoa" id="XM_011252545.3">
    <property type="protein sequence ID" value="XP_011250847.3"/>
    <property type="gene ID" value="LOC105248016"/>
</dbReference>
<dbReference type="KEGG" id="cfo:105248016"/>
<dbReference type="OMA" id="HKWQLKP"/>
<dbReference type="OrthoDB" id="5950649at2759"/>
<dbReference type="Proteomes" id="UP000000311">
    <property type="component" value="Unassembled WGS sequence"/>
</dbReference>
<dbReference type="GO" id="GO:0005576">
    <property type="term" value="C:extracellular region"/>
    <property type="evidence" value="ECO:0007669"/>
    <property type="project" value="UniProtKB-SubCell"/>
</dbReference>
<dbReference type="GO" id="GO:0018445">
    <property type="term" value="F:prothoracicotrophic hormone activity"/>
    <property type="evidence" value="ECO:0007669"/>
    <property type="project" value="TreeGrafter"/>
</dbReference>
<dbReference type="GO" id="GO:0007218">
    <property type="term" value="P:neuropeptide signaling pathway"/>
    <property type="evidence" value="ECO:0007669"/>
    <property type="project" value="UniProtKB-KW"/>
</dbReference>
<dbReference type="Gene3D" id="2.10.90.10">
    <property type="entry name" value="Cystine-knot cytokines"/>
    <property type="match status" value="1"/>
</dbReference>
<dbReference type="InterPro" id="IPR029034">
    <property type="entry name" value="Cystine-knot_cytokine"/>
</dbReference>
<dbReference type="InterPro" id="IPR052876">
    <property type="entry name" value="Insect_Hormone_Regulators"/>
</dbReference>
<dbReference type="PANTHER" id="PTHR39940">
    <property type="entry name" value="PROTHORACICOTROPIC HORMONE, ISOFORM F"/>
    <property type="match status" value="1"/>
</dbReference>
<dbReference type="PANTHER" id="PTHR39940:SF1">
    <property type="entry name" value="PROTHORACICOTROPIC HORMONE, ISOFORM F"/>
    <property type="match status" value="1"/>
</dbReference>
<dbReference type="SUPFAM" id="SSF57501">
    <property type="entry name" value="Cystine-knot cytokines"/>
    <property type="match status" value="1"/>
</dbReference>
<keyword id="KW-0165">Cleavage on pair of basic residues</keyword>
<keyword id="KW-0903">Direct protein sequencing</keyword>
<keyword id="KW-1015">Disulfide bond</keyword>
<keyword id="KW-0372">Hormone</keyword>
<keyword id="KW-0527">Neuropeptide</keyword>
<keyword id="KW-1185">Reference proteome</keyword>
<keyword id="KW-0964">Secreted</keyword>
<keyword id="KW-0732">Signal</keyword>
<evidence type="ECO:0000250" key="1">
    <source>
        <dbReference type="UniProtKB" id="P17219"/>
    </source>
</evidence>
<evidence type="ECO:0000255" key="2"/>
<evidence type="ECO:0000303" key="3">
    <source>
    </source>
</evidence>
<evidence type="ECO:0000305" key="4"/>
<evidence type="ECO:0000305" key="5">
    <source>
    </source>
</evidence>
<evidence type="ECO:0000312" key="6">
    <source>
        <dbReference type="EMBL" id="EFN74770.1"/>
    </source>
</evidence>
<feature type="signal peptide" evidence="2">
    <location>
        <begin position="1"/>
        <end position="15"/>
    </location>
</feature>
<feature type="propeptide" id="PRO_0000434255" evidence="5">
    <location>
        <begin position="16"/>
        <end position="64"/>
    </location>
</feature>
<feature type="peptide" id="PRO_0000434256" description="Prothoracicotropic hormone" evidence="3">
    <location>
        <begin position="67"/>
        <end position="180"/>
    </location>
</feature>
<feature type="disulfide bond" description="Interchain" evidence="1">
    <location>
        <position position="86"/>
    </location>
</feature>
<feature type="disulfide bond" evidence="1">
    <location>
        <begin position="88"/>
        <end position="123"/>
    </location>
</feature>
<feature type="disulfide bond" evidence="1">
    <location>
        <begin position="111"/>
        <end position="175"/>
    </location>
</feature>
<accession>E1ZVK1</accession>
<gene>
    <name evidence="6" type="ORF">EAG_10178</name>
</gene>
<comment type="function">
    <text evidence="1">PTTH is a brain secretory polypeptide of insects which stimulates the prothoracic glands to produce and release ecdysone, the steroid essential to insect development.</text>
</comment>
<comment type="subunit">
    <text evidence="1">Homodimer; disulfide-linked.</text>
</comment>
<comment type="subcellular location">
    <subcellularLocation>
        <location evidence="5">Secreted</location>
    </subcellularLocation>
</comment>
<comment type="caution">
    <text evidence="5">It is unclear whether the detected peptide spanning residues 67-81 is active on its own or just constitutes the N-terminus of the predicted sequence of prothoracicotropic hormone.</text>
</comment>
<organism>
    <name type="scientific">Camponotus floridanus</name>
    <name type="common">Florida carpenter ant</name>
    <dbReference type="NCBI Taxonomy" id="104421"/>
    <lineage>
        <taxon>Eukaryota</taxon>
        <taxon>Metazoa</taxon>
        <taxon>Ecdysozoa</taxon>
        <taxon>Arthropoda</taxon>
        <taxon>Hexapoda</taxon>
        <taxon>Insecta</taxon>
        <taxon>Pterygota</taxon>
        <taxon>Neoptera</taxon>
        <taxon>Endopterygota</taxon>
        <taxon>Hymenoptera</taxon>
        <taxon>Apocrita</taxon>
        <taxon>Aculeata</taxon>
        <taxon>Formicoidea</taxon>
        <taxon>Formicidae</taxon>
        <taxon>Formicinae</taxon>
        <taxon>Camponotus</taxon>
    </lineage>
</organism>
<proteinExistence type="evidence at protein level"/>
<sequence length="180" mass="20616">MKLLILCVMVHGLLAEGPGQVLWKEQVVAPEFLLDDREDIASNRNAFFYEDKRSFRPEGLGEQVKRIAGAEDVGLQPRLVTRSLQCTCETEYEYRNLGEGHYPRYLTTSHCKPKACQNKFNSCRLLYYKVHILSQRDLNGLSDDRYSDDSETETPLPEALRHKWQLKPMKIPVACVPATG</sequence>
<protein>
    <recommendedName>
        <fullName evidence="3">Prothoracicotropic hormone</fullName>
        <shortName evidence="3">PTTH</shortName>
    </recommendedName>
</protein>